<keyword id="KW-0227">DNA damage</keyword>
<keyword id="KW-0233">DNA recombination</keyword>
<keyword id="KW-0234">DNA repair</keyword>
<keyword id="KW-1185">Reference proteome</keyword>
<comment type="function">
    <text evidence="1">Involved in DNA repair and RecF pathway recombination.</text>
</comment>
<comment type="subunit">
    <text evidence="1">Monomer.</text>
</comment>
<comment type="similarity">
    <text evidence="2">Belongs to the RecO family.</text>
</comment>
<sequence length="242" mass="27391">MEGWQRAFVLHSRPWSETSLMLDVFTEESGRVRLVAKGARSKRSTLKGALQPFTPLLLRFGGRGEVKTLRSAEAVSLALPLSGITLYSGLYINELLSRVLEYETRFSELFFDYLHCIQSLAGVTGTPEPALRRFELALLGHLGYGVNFTHCAGSGEPVDDTMTYRYREEKGFIASVVIDNKTFTGRQLKALNAREFPDADTLRAAKRFTRMALKPYLGGKPLKSRELFRQFMPKRTVKTHYE</sequence>
<protein>
    <recommendedName>
        <fullName>DNA repair protein RecO</fullName>
    </recommendedName>
    <alternativeName>
        <fullName>Recombination protein O</fullName>
    </alternativeName>
</protein>
<reference key="1">
    <citation type="journal article" date="2002" name="Proc. Natl. Acad. Sci. U.S.A.">
        <title>Extensive mosaic structure revealed by the complete genome sequence of uropathogenic Escherichia coli.</title>
        <authorList>
            <person name="Welch R.A."/>
            <person name="Burland V."/>
            <person name="Plunkett G. III"/>
            <person name="Redford P."/>
            <person name="Roesch P."/>
            <person name="Rasko D."/>
            <person name="Buckles E.L."/>
            <person name="Liou S.-R."/>
            <person name="Boutin A."/>
            <person name="Hackett J."/>
            <person name="Stroud D."/>
            <person name="Mayhew G.F."/>
            <person name="Rose D.J."/>
            <person name="Zhou S."/>
            <person name="Schwartz D.C."/>
            <person name="Perna N.T."/>
            <person name="Mobley H.L.T."/>
            <person name="Donnenberg M.S."/>
            <person name="Blattner F.R."/>
        </authorList>
    </citation>
    <scope>NUCLEOTIDE SEQUENCE [LARGE SCALE GENOMIC DNA]</scope>
    <source>
        <strain>CFT073 / ATCC 700928 / UPEC</strain>
    </source>
</reference>
<gene>
    <name type="primary">recO</name>
    <name type="ordered locus">c3089</name>
</gene>
<name>RECO_ECOL6</name>
<evidence type="ECO:0000250" key="1"/>
<evidence type="ECO:0000305" key="2"/>
<feature type="chain" id="PRO_0000204951" description="DNA repair protein RecO">
    <location>
        <begin position="1"/>
        <end position="242"/>
    </location>
</feature>
<dbReference type="EMBL" id="AE014075">
    <property type="protein sequence ID" value="AAN81538.1"/>
    <property type="molecule type" value="Genomic_DNA"/>
</dbReference>
<dbReference type="RefSeq" id="WP_000399404.1">
    <property type="nucleotide sequence ID" value="NZ_CP051263.1"/>
</dbReference>
<dbReference type="SMR" id="P0A7H4"/>
<dbReference type="STRING" id="199310.c3089"/>
<dbReference type="KEGG" id="ecc:c3089"/>
<dbReference type="eggNOG" id="COG1381">
    <property type="taxonomic scope" value="Bacteria"/>
</dbReference>
<dbReference type="HOGENOM" id="CLU_066645_1_0_6"/>
<dbReference type="BioCyc" id="ECOL199310:C3089-MONOMER"/>
<dbReference type="Proteomes" id="UP000001410">
    <property type="component" value="Chromosome"/>
</dbReference>
<dbReference type="GO" id="GO:0043590">
    <property type="term" value="C:bacterial nucleoid"/>
    <property type="evidence" value="ECO:0007669"/>
    <property type="project" value="TreeGrafter"/>
</dbReference>
<dbReference type="GO" id="GO:0006310">
    <property type="term" value="P:DNA recombination"/>
    <property type="evidence" value="ECO:0007669"/>
    <property type="project" value="UniProtKB-UniRule"/>
</dbReference>
<dbReference type="GO" id="GO:0006302">
    <property type="term" value="P:double-strand break repair"/>
    <property type="evidence" value="ECO:0007669"/>
    <property type="project" value="TreeGrafter"/>
</dbReference>
<dbReference type="FunFam" id="1.20.1440.120:FF:000001">
    <property type="entry name" value="DNA repair protein RecO"/>
    <property type="match status" value="1"/>
</dbReference>
<dbReference type="FunFam" id="2.40.50.140:FF:000074">
    <property type="entry name" value="DNA repair protein RecO"/>
    <property type="match status" value="1"/>
</dbReference>
<dbReference type="Gene3D" id="2.40.50.140">
    <property type="entry name" value="Nucleic acid-binding proteins"/>
    <property type="match status" value="1"/>
</dbReference>
<dbReference type="Gene3D" id="1.20.1440.120">
    <property type="entry name" value="Recombination protein O, C-terminal domain"/>
    <property type="match status" value="1"/>
</dbReference>
<dbReference type="HAMAP" id="MF_00201">
    <property type="entry name" value="RecO"/>
    <property type="match status" value="1"/>
</dbReference>
<dbReference type="InterPro" id="IPR037278">
    <property type="entry name" value="ARFGAP/RecO"/>
</dbReference>
<dbReference type="InterPro" id="IPR022572">
    <property type="entry name" value="DNA_rep/recomb_RecO_N"/>
</dbReference>
<dbReference type="InterPro" id="IPR012340">
    <property type="entry name" value="NA-bd_OB-fold"/>
</dbReference>
<dbReference type="InterPro" id="IPR003717">
    <property type="entry name" value="RecO"/>
</dbReference>
<dbReference type="InterPro" id="IPR042242">
    <property type="entry name" value="RecO_C"/>
</dbReference>
<dbReference type="NCBIfam" id="TIGR00613">
    <property type="entry name" value="reco"/>
    <property type="match status" value="1"/>
</dbReference>
<dbReference type="PANTHER" id="PTHR33991">
    <property type="entry name" value="DNA REPAIR PROTEIN RECO"/>
    <property type="match status" value="1"/>
</dbReference>
<dbReference type="PANTHER" id="PTHR33991:SF1">
    <property type="entry name" value="DNA REPAIR PROTEIN RECO"/>
    <property type="match status" value="1"/>
</dbReference>
<dbReference type="Pfam" id="PF02565">
    <property type="entry name" value="RecO_C"/>
    <property type="match status" value="1"/>
</dbReference>
<dbReference type="Pfam" id="PF11967">
    <property type="entry name" value="RecO_N"/>
    <property type="match status" value="1"/>
</dbReference>
<dbReference type="SUPFAM" id="SSF57863">
    <property type="entry name" value="ArfGap/RecO-like zinc finger"/>
    <property type="match status" value="1"/>
</dbReference>
<dbReference type="SUPFAM" id="SSF50249">
    <property type="entry name" value="Nucleic acid-binding proteins"/>
    <property type="match status" value="1"/>
</dbReference>
<accession>P0A7H4</accession>
<accession>P15027</accession>
<accession>P76589</accession>
<proteinExistence type="inferred from homology"/>
<organism>
    <name type="scientific">Escherichia coli O6:H1 (strain CFT073 / ATCC 700928 / UPEC)</name>
    <dbReference type="NCBI Taxonomy" id="199310"/>
    <lineage>
        <taxon>Bacteria</taxon>
        <taxon>Pseudomonadati</taxon>
        <taxon>Pseudomonadota</taxon>
        <taxon>Gammaproteobacteria</taxon>
        <taxon>Enterobacterales</taxon>
        <taxon>Enterobacteriaceae</taxon>
        <taxon>Escherichia</taxon>
    </lineage>
</organism>